<protein>
    <recommendedName>
        <fullName>Uncharacterized protein C1orf141</fullName>
    </recommendedName>
</protein>
<name>CA141_HUMAN</name>
<dbReference type="EMBL" id="AL133320">
    <property type="status" value="NOT_ANNOTATED_CDS"/>
    <property type="molecule type" value="Genomic_DNA"/>
</dbReference>
<dbReference type="EMBL" id="BC047053">
    <property type="protein sequence ID" value="AAH47053.1"/>
    <property type="molecule type" value="mRNA"/>
</dbReference>
<dbReference type="EMBL" id="BC090886">
    <property type="protein sequence ID" value="AAH90886.1"/>
    <property type="molecule type" value="mRNA"/>
</dbReference>
<dbReference type="CCDS" id="CCDS30745.1">
    <molecule id="Q5JVX7-1"/>
</dbReference>
<dbReference type="RefSeq" id="NP_001263280.1">
    <molecule id="Q5JVX7-1"/>
    <property type="nucleotide sequence ID" value="NM_001276351.2"/>
</dbReference>
<dbReference type="SMR" id="Q5JVX7"/>
<dbReference type="BioGRID" id="134747">
    <property type="interactions" value="4"/>
</dbReference>
<dbReference type="STRING" id="9606.ENSP00000360046"/>
<dbReference type="iPTMnet" id="Q5JVX7"/>
<dbReference type="PhosphoSitePlus" id="Q5JVX7"/>
<dbReference type="BioMuta" id="C1orf141"/>
<dbReference type="DMDM" id="74742495"/>
<dbReference type="MassIVE" id="Q5JVX7"/>
<dbReference type="PaxDb" id="9606-ENSP00000360046"/>
<dbReference type="Antibodypedia" id="33403">
    <property type="antibodies" value="49 antibodies from 11 providers"/>
</dbReference>
<dbReference type="DNASU" id="400757"/>
<dbReference type="Ensembl" id="ENST00000371006.5">
    <molecule id="Q5JVX7-1"/>
    <property type="protein sequence ID" value="ENSP00000360045.1"/>
    <property type="gene ID" value="ENSG00000203963.12"/>
</dbReference>
<dbReference type="Ensembl" id="ENST00000371007.6">
    <molecule id="Q5JVX7-1"/>
    <property type="protein sequence ID" value="ENSP00000360046.1"/>
    <property type="gene ID" value="ENSG00000203963.12"/>
</dbReference>
<dbReference type="Ensembl" id="ENST00000621590.4">
    <molecule id="Q5JVX7-2"/>
    <property type="protein sequence ID" value="ENSP00000481294.1"/>
    <property type="gene ID" value="ENSG00000203963.12"/>
</dbReference>
<dbReference type="Ensembl" id="ENST00000684719.1">
    <molecule id="Q5JVX7-1"/>
    <property type="protein sequence ID" value="ENSP00000507487.1"/>
    <property type="gene ID" value="ENSG00000203963.12"/>
</dbReference>
<dbReference type="GeneID" id="400757"/>
<dbReference type="KEGG" id="hsa:400757"/>
<dbReference type="MANE-Select" id="ENST00000684719.1">
    <property type="protein sequence ID" value="ENSP00000507487.1"/>
    <property type="RefSeq nucleotide sequence ID" value="NM_001276351.2"/>
    <property type="RefSeq protein sequence ID" value="NP_001263280.1"/>
</dbReference>
<dbReference type="UCSC" id="uc057hjb.1">
    <molecule id="Q5JVX7-1"/>
    <property type="organism name" value="human"/>
</dbReference>
<dbReference type="AGR" id="HGNC:32044"/>
<dbReference type="CTD" id="400757"/>
<dbReference type="DisGeNET" id="400757"/>
<dbReference type="GeneCards" id="C1orf141"/>
<dbReference type="HGNC" id="HGNC:32044">
    <property type="gene designation" value="C1orf141"/>
</dbReference>
<dbReference type="HPA" id="ENSG00000203963">
    <property type="expression patterns" value="Tissue enhanced (fallopian tube, testis)"/>
</dbReference>
<dbReference type="neXtProt" id="NX_Q5JVX7"/>
<dbReference type="OpenTargets" id="ENSG00000203963"/>
<dbReference type="PharmGKB" id="PA142672459"/>
<dbReference type="VEuPathDB" id="HostDB:ENSG00000203963"/>
<dbReference type="eggNOG" id="ENOG502SCCV">
    <property type="taxonomic scope" value="Eukaryota"/>
</dbReference>
<dbReference type="GeneTree" id="ENSGT00390000010146"/>
<dbReference type="HOGENOM" id="CLU_058935_0_0_1"/>
<dbReference type="InParanoid" id="Q5JVX7"/>
<dbReference type="OMA" id="HPMENRN"/>
<dbReference type="OrthoDB" id="9905507at2759"/>
<dbReference type="PAN-GO" id="Q5JVX7">
    <property type="GO annotations" value="0 GO annotations based on evolutionary models"/>
</dbReference>
<dbReference type="PhylomeDB" id="Q5JVX7"/>
<dbReference type="TreeFam" id="TF340010"/>
<dbReference type="PathwayCommons" id="Q5JVX7"/>
<dbReference type="BioGRID-ORCS" id="400757">
    <property type="hits" value="6 hits in 1113 CRISPR screens"/>
</dbReference>
<dbReference type="ChiTaRS" id="C1orf141">
    <property type="organism name" value="human"/>
</dbReference>
<dbReference type="GenomeRNAi" id="400757"/>
<dbReference type="Pharos" id="Q5JVX7">
    <property type="development level" value="Tdark"/>
</dbReference>
<dbReference type="PRO" id="PR:Q5JVX7"/>
<dbReference type="Proteomes" id="UP000005640">
    <property type="component" value="Chromosome 1"/>
</dbReference>
<dbReference type="RNAct" id="Q5JVX7">
    <property type="molecule type" value="protein"/>
</dbReference>
<dbReference type="Bgee" id="ENSG00000203963">
    <property type="expression patterns" value="Expressed in right uterine tube and 50 other cell types or tissues"/>
</dbReference>
<dbReference type="ExpressionAtlas" id="Q5JVX7">
    <property type="expression patterns" value="baseline and differential"/>
</dbReference>
<dbReference type="InterPro" id="IPR027847">
    <property type="entry name" value="DUF4545"/>
</dbReference>
<dbReference type="PANTHER" id="PTHR36873">
    <property type="entry name" value="HYPOTHETICAL GENE SUPPORTED BY BC079057"/>
    <property type="match status" value="1"/>
</dbReference>
<dbReference type="PANTHER" id="PTHR36873:SF1">
    <property type="entry name" value="HYPOTHETICAL GENE SUPPORTED BY BC079057"/>
    <property type="match status" value="1"/>
</dbReference>
<dbReference type="Pfam" id="PF15078">
    <property type="entry name" value="DUF4545"/>
    <property type="match status" value="2"/>
</dbReference>
<gene>
    <name type="primary">C1orf141</name>
</gene>
<accession>Q5JVX7</accession>
<accession>Q0P5P5</accession>
<accession>Q5JVX5</accession>
<sequence>MAEKILEKLDVLDKQAEIILARRTKINRLQSEGRKTTMAIPLTFDFQLEFEEALATSASKAISKIKEDKSCSITKSKMHVSFKCEPEPRKSNFEKSNLRPFFIQTNVKNKESESTAQIEKKPRKPLDSVGLLEGDRNKRKKSPQMNDFNIKENKSVRNYQLSKYRSVRKKSLLPLCFEDELKNPHAKIVNVSPTKTVTSHMEQKDTNPIIFHDTEYVRMLLLTKNRFSSHPLENENIYPHKRTNFILERNCEILKSIIGNQSISLFKPQKTMPTVQRKDIQIPMSFKAGHTTVDDKLKKKTNKQTLENRSWNTLYNFSQNFSSLTKQFVGYLDKAVIHEMSAQTGKFERMFSAGKPTSIPTSSALPVKCYSKPFKYIYELNNVTPLDNLLNLSNEILNAS</sequence>
<evidence type="ECO:0000256" key="1">
    <source>
        <dbReference type="SAM" id="MobiDB-lite"/>
    </source>
</evidence>
<evidence type="ECO:0000269" key="2">
    <source>
    </source>
</evidence>
<evidence type="ECO:0000303" key="3">
    <source>
    </source>
</evidence>
<proteinExistence type="evidence at transcript level"/>
<feature type="chain" id="PRO_0000294456" description="Uncharacterized protein C1orf141">
    <location>
        <begin position="1"/>
        <end position="400"/>
    </location>
</feature>
<feature type="region of interest" description="Disordered" evidence="1">
    <location>
        <begin position="112"/>
        <end position="151"/>
    </location>
</feature>
<feature type="compositionally biased region" description="Basic and acidic residues" evidence="1">
    <location>
        <begin position="112"/>
        <end position="126"/>
    </location>
</feature>
<feature type="splice variant" id="VSP_026643" description="In isoform 2." evidence="3">
    <original>MHV</original>
    <variation>ISN</variation>
    <location>
        <begin position="78"/>
        <end position="80"/>
    </location>
</feature>
<feature type="splice variant" id="VSP_026644" description="In isoform 2." evidence="3">
    <location>
        <begin position="81"/>
        <end position="400"/>
    </location>
</feature>
<feature type="sequence variant" id="VAR_033186" description="In dbSNP:rs2273682.">
    <original>E</original>
    <variation>G</variation>
    <location>
        <position position="85"/>
    </location>
</feature>
<feature type="sequence variant" id="VAR_033187" description="In dbSNP:rs11208997." evidence="2">
    <original>V</original>
    <variation>I</variation>
    <location>
        <position position="189"/>
    </location>
</feature>
<keyword id="KW-0025">Alternative splicing</keyword>
<keyword id="KW-1185">Reference proteome</keyword>
<reference key="1">
    <citation type="journal article" date="2006" name="Nature">
        <title>The DNA sequence and biological annotation of human chromosome 1.</title>
        <authorList>
            <person name="Gregory S.G."/>
            <person name="Barlow K.F."/>
            <person name="McLay K.E."/>
            <person name="Kaul R."/>
            <person name="Swarbreck D."/>
            <person name="Dunham A."/>
            <person name="Scott C.E."/>
            <person name="Howe K.L."/>
            <person name="Woodfine K."/>
            <person name="Spencer C.C.A."/>
            <person name="Jones M.C."/>
            <person name="Gillson C."/>
            <person name="Searle S."/>
            <person name="Zhou Y."/>
            <person name="Kokocinski F."/>
            <person name="McDonald L."/>
            <person name="Evans R."/>
            <person name="Phillips K."/>
            <person name="Atkinson A."/>
            <person name="Cooper R."/>
            <person name="Jones C."/>
            <person name="Hall R.E."/>
            <person name="Andrews T.D."/>
            <person name="Lloyd C."/>
            <person name="Ainscough R."/>
            <person name="Almeida J.P."/>
            <person name="Ambrose K.D."/>
            <person name="Anderson F."/>
            <person name="Andrew R.W."/>
            <person name="Ashwell R.I.S."/>
            <person name="Aubin K."/>
            <person name="Babbage A.K."/>
            <person name="Bagguley C.L."/>
            <person name="Bailey J."/>
            <person name="Beasley H."/>
            <person name="Bethel G."/>
            <person name="Bird C.P."/>
            <person name="Bray-Allen S."/>
            <person name="Brown J.Y."/>
            <person name="Brown A.J."/>
            <person name="Buckley D."/>
            <person name="Burton J."/>
            <person name="Bye J."/>
            <person name="Carder C."/>
            <person name="Chapman J.C."/>
            <person name="Clark S.Y."/>
            <person name="Clarke G."/>
            <person name="Clee C."/>
            <person name="Cobley V."/>
            <person name="Collier R.E."/>
            <person name="Corby N."/>
            <person name="Coville G.J."/>
            <person name="Davies J."/>
            <person name="Deadman R."/>
            <person name="Dunn M."/>
            <person name="Earthrowl M."/>
            <person name="Ellington A.G."/>
            <person name="Errington H."/>
            <person name="Frankish A."/>
            <person name="Frankland J."/>
            <person name="French L."/>
            <person name="Garner P."/>
            <person name="Garnett J."/>
            <person name="Gay L."/>
            <person name="Ghori M.R.J."/>
            <person name="Gibson R."/>
            <person name="Gilby L.M."/>
            <person name="Gillett W."/>
            <person name="Glithero R.J."/>
            <person name="Grafham D.V."/>
            <person name="Griffiths C."/>
            <person name="Griffiths-Jones S."/>
            <person name="Grocock R."/>
            <person name="Hammond S."/>
            <person name="Harrison E.S.I."/>
            <person name="Hart E."/>
            <person name="Haugen E."/>
            <person name="Heath P.D."/>
            <person name="Holmes S."/>
            <person name="Holt K."/>
            <person name="Howden P.J."/>
            <person name="Hunt A.R."/>
            <person name="Hunt S.E."/>
            <person name="Hunter G."/>
            <person name="Isherwood J."/>
            <person name="James R."/>
            <person name="Johnson C."/>
            <person name="Johnson D."/>
            <person name="Joy A."/>
            <person name="Kay M."/>
            <person name="Kershaw J.K."/>
            <person name="Kibukawa M."/>
            <person name="Kimberley A.M."/>
            <person name="King A."/>
            <person name="Knights A.J."/>
            <person name="Lad H."/>
            <person name="Laird G."/>
            <person name="Lawlor S."/>
            <person name="Leongamornlert D.A."/>
            <person name="Lloyd D.M."/>
            <person name="Loveland J."/>
            <person name="Lovell J."/>
            <person name="Lush M.J."/>
            <person name="Lyne R."/>
            <person name="Martin S."/>
            <person name="Mashreghi-Mohammadi M."/>
            <person name="Matthews L."/>
            <person name="Matthews N.S.W."/>
            <person name="McLaren S."/>
            <person name="Milne S."/>
            <person name="Mistry S."/>
            <person name="Moore M.J.F."/>
            <person name="Nickerson T."/>
            <person name="O'Dell C.N."/>
            <person name="Oliver K."/>
            <person name="Palmeiri A."/>
            <person name="Palmer S.A."/>
            <person name="Parker A."/>
            <person name="Patel D."/>
            <person name="Pearce A.V."/>
            <person name="Peck A.I."/>
            <person name="Pelan S."/>
            <person name="Phelps K."/>
            <person name="Phillimore B.J."/>
            <person name="Plumb R."/>
            <person name="Rajan J."/>
            <person name="Raymond C."/>
            <person name="Rouse G."/>
            <person name="Saenphimmachak C."/>
            <person name="Sehra H.K."/>
            <person name="Sheridan E."/>
            <person name="Shownkeen R."/>
            <person name="Sims S."/>
            <person name="Skuce C.D."/>
            <person name="Smith M."/>
            <person name="Steward C."/>
            <person name="Subramanian S."/>
            <person name="Sycamore N."/>
            <person name="Tracey A."/>
            <person name="Tromans A."/>
            <person name="Van Helmond Z."/>
            <person name="Wall M."/>
            <person name="Wallis J.M."/>
            <person name="White S."/>
            <person name="Whitehead S.L."/>
            <person name="Wilkinson J.E."/>
            <person name="Willey D.L."/>
            <person name="Williams H."/>
            <person name="Wilming L."/>
            <person name="Wray P.W."/>
            <person name="Wu Z."/>
            <person name="Coulson A."/>
            <person name="Vaudin M."/>
            <person name="Sulston J.E."/>
            <person name="Durbin R.M."/>
            <person name="Hubbard T."/>
            <person name="Wooster R."/>
            <person name="Dunham I."/>
            <person name="Carter N.P."/>
            <person name="McVean G."/>
            <person name="Ross M.T."/>
            <person name="Harrow J."/>
            <person name="Olson M.V."/>
            <person name="Beck S."/>
            <person name="Rogers J."/>
            <person name="Bentley D.R."/>
        </authorList>
    </citation>
    <scope>NUCLEOTIDE SEQUENCE [LARGE SCALE GENOMIC DNA]</scope>
</reference>
<reference key="2">
    <citation type="journal article" date="2004" name="Genome Res.">
        <title>The status, quality, and expansion of the NIH full-length cDNA project: the Mammalian Gene Collection (MGC).</title>
        <authorList>
            <consortium name="The MGC Project Team"/>
        </authorList>
    </citation>
    <scope>NUCLEOTIDE SEQUENCE [LARGE SCALE MRNA] (ISOFORMS 1 AND 2)</scope>
    <scope>VARIANT ILE-189</scope>
    <source>
        <tissue>Testis</tissue>
    </source>
</reference>
<comment type="alternative products">
    <event type="alternative splicing"/>
    <isoform>
        <id>Q5JVX7-1</id>
        <name>1</name>
        <sequence type="displayed"/>
    </isoform>
    <isoform>
        <id>Q5JVX7-2</id>
        <name>2</name>
        <sequence type="described" ref="VSP_026643 VSP_026644"/>
    </isoform>
</comment>
<organism>
    <name type="scientific">Homo sapiens</name>
    <name type="common">Human</name>
    <dbReference type="NCBI Taxonomy" id="9606"/>
    <lineage>
        <taxon>Eukaryota</taxon>
        <taxon>Metazoa</taxon>
        <taxon>Chordata</taxon>
        <taxon>Craniata</taxon>
        <taxon>Vertebrata</taxon>
        <taxon>Euteleostomi</taxon>
        <taxon>Mammalia</taxon>
        <taxon>Eutheria</taxon>
        <taxon>Euarchontoglires</taxon>
        <taxon>Primates</taxon>
        <taxon>Haplorrhini</taxon>
        <taxon>Catarrhini</taxon>
        <taxon>Hominidae</taxon>
        <taxon>Homo</taxon>
    </lineage>
</organism>